<accession>P10058</accession>
<organism>
    <name type="scientific">Eudyptes chrysocome</name>
    <name type="common">Western rockhopper penguin</name>
    <name type="synonym">Aptenodytes chrysocome</name>
    <dbReference type="NCBI Taxonomy" id="79626"/>
    <lineage>
        <taxon>Eukaryota</taxon>
        <taxon>Metazoa</taxon>
        <taxon>Chordata</taxon>
        <taxon>Craniata</taxon>
        <taxon>Vertebrata</taxon>
        <taxon>Euteleostomi</taxon>
        <taxon>Archelosauria</taxon>
        <taxon>Archosauria</taxon>
        <taxon>Dinosauria</taxon>
        <taxon>Saurischia</taxon>
        <taxon>Theropoda</taxon>
        <taxon>Coelurosauria</taxon>
        <taxon>Aves</taxon>
        <taxon>Neognathae</taxon>
        <taxon>Neoaves</taxon>
        <taxon>Aequornithes</taxon>
        <taxon>Sphenisciformes</taxon>
        <taxon>Spheniscidae</taxon>
        <taxon>Eudyptes</taxon>
    </lineage>
</organism>
<protein>
    <recommendedName>
        <fullName>Hemoglobin subunit beta</fullName>
    </recommendedName>
    <alternativeName>
        <fullName>Beta-globin</fullName>
    </alternativeName>
    <alternativeName>
        <fullName>Hemoglobin beta chain</fullName>
    </alternativeName>
</protein>
<gene>
    <name type="primary">HBB</name>
</gene>
<sequence length="146" mass="16295">VHWSAEEKQLITGLWGKVNVAQCGGEALARLLIVYPWTQRFFSSFGNLSSPSAILGNPMVRAHGKKVLTSFGDAVKNMDNIKNTFAQLSELHCDKLHVDPENFRLLGDILIIVLAAHFAKDFTPECQAAWEKLVRVVAHALARKYH</sequence>
<reference key="1">
    <citation type="journal article" date="1988" name="Biol. Chem. Hoppe-Seyler">
        <title>The primary structure of the hemoglobin of the Rock-Hopper penguin (Eudyptes crestatus, Sphenisciformes).</title>
        <authorList>
            <person name="Huber K."/>
            <person name="Braunitzer G."/>
            <person name="Schneeganss D."/>
            <person name="Kosters J."/>
            <person name="Grimm F."/>
        </authorList>
    </citation>
    <scope>PROTEIN SEQUENCE</scope>
</reference>
<comment type="function">
    <text>Involved in oxygen transport from the lung to the various peripheral tissues.</text>
</comment>
<comment type="subunit">
    <text>Heterotetramer of two alpha chains and two beta chains.</text>
</comment>
<comment type="tissue specificity">
    <text>Red blood cells.</text>
</comment>
<comment type="similarity">
    <text evidence="1">Belongs to the globin family.</text>
</comment>
<feature type="chain" id="PRO_0000052957" description="Hemoglobin subunit beta">
    <location>
        <begin position="1"/>
        <end position="146"/>
    </location>
</feature>
<feature type="domain" description="Globin" evidence="1">
    <location>
        <begin position="2"/>
        <end position="146"/>
    </location>
</feature>
<feature type="binding site" description="distal binding residue">
    <location>
        <position position="63"/>
    </location>
    <ligand>
        <name>heme b</name>
        <dbReference type="ChEBI" id="CHEBI:60344"/>
    </ligand>
    <ligandPart>
        <name>Fe</name>
        <dbReference type="ChEBI" id="CHEBI:18248"/>
    </ligandPart>
</feature>
<feature type="binding site" description="proximal binding residue">
    <location>
        <position position="92"/>
    </location>
    <ligand>
        <name>heme b</name>
        <dbReference type="ChEBI" id="CHEBI:60344"/>
    </ligand>
    <ligandPart>
        <name>Fe</name>
        <dbReference type="ChEBI" id="CHEBI:18248"/>
    </ligandPart>
</feature>
<proteinExistence type="evidence at protein level"/>
<keyword id="KW-0903">Direct protein sequencing</keyword>
<keyword id="KW-0349">Heme</keyword>
<keyword id="KW-0408">Iron</keyword>
<keyword id="KW-0479">Metal-binding</keyword>
<keyword id="KW-0561">Oxygen transport</keyword>
<keyword id="KW-0813">Transport</keyword>
<evidence type="ECO:0000255" key="1">
    <source>
        <dbReference type="PROSITE-ProRule" id="PRU00238"/>
    </source>
</evidence>
<name>HBB_EUDCH</name>
<dbReference type="PIR" id="S00823">
    <property type="entry name" value="HBPNR"/>
</dbReference>
<dbReference type="SMR" id="P10058"/>
<dbReference type="OrthoDB" id="8751793at2759"/>
<dbReference type="GO" id="GO:0072562">
    <property type="term" value="C:blood microparticle"/>
    <property type="evidence" value="ECO:0007669"/>
    <property type="project" value="TreeGrafter"/>
</dbReference>
<dbReference type="GO" id="GO:0031838">
    <property type="term" value="C:haptoglobin-hemoglobin complex"/>
    <property type="evidence" value="ECO:0007669"/>
    <property type="project" value="TreeGrafter"/>
</dbReference>
<dbReference type="GO" id="GO:0005833">
    <property type="term" value="C:hemoglobin complex"/>
    <property type="evidence" value="ECO:0007669"/>
    <property type="project" value="InterPro"/>
</dbReference>
<dbReference type="GO" id="GO:0031720">
    <property type="term" value="F:haptoglobin binding"/>
    <property type="evidence" value="ECO:0007669"/>
    <property type="project" value="TreeGrafter"/>
</dbReference>
<dbReference type="GO" id="GO:0020037">
    <property type="term" value="F:heme binding"/>
    <property type="evidence" value="ECO:0007669"/>
    <property type="project" value="InterPro"/>
</dbReference>
<dbReference type="GO" id="GO:0046872">
    <property type="term" value="F:metal ion binding"/>
    <property type="evidence" value="ECO:0007669"/>
    <property type="project" value="UniProtKB-KW"/>
</dbReference>
<dbReference type="GO" id="GO:0043177">
    <property type="term" value="F:organic acid binding"/>
    <property type="evidence" value="ECO:0007669"/>
    <property type="project" value="TreeGrafter"/>
</dbReference>
<dbReference type="GO" id="GO:0019825">
    <property type="term" value="F:oxygen binding"/>
    <property type="evidence" value="ECO:0007669"/>
    <property type="project" value="InterPro"/>
</dbReference>
<dbReference type="GO" id="GO:0005344">
    <property type="term" value="F:oxygen carrier activity"/>
    <property type="evidence" value="ECO:0007669"/>
    <property type="project" value="UniProtKB-KW"/>
</dbReference>
<dbReference type="GO" id="GO:0004601">
    <property type="term" value="F:peroxidase activity"/>
    <property type="evidence" value="ECO:0007669"/>
    <property type="project" value="TreeGrafter"/>
</dbReference>
<dbReference type="GO" id="GO:0042744">
    <property type="term" value="P:hydrogen peroxide catabolic process"/>
    <property type="evidence" value="ECO:0007669"/>
    <property type="project" value="TreeGrafter"/>
</dbReference>
<dbReference type="CDD" id="cd08925">
    <property type="entry name" value="Hb-beta-like"/>
    <property type="match status" value="1"/>
</dbReference>
<dbReference type="FunFam" id="1.10.490.10:FF:000001">
    <property type="entry name" value="Hemoglobin subunit beta"/>
    <property type="match status" value="1"/>
</dbReference>
<dbReference type="Gene3D" id="1.10.490.10">
    <property type="entry name" value="Globins"/>
    <property type="match status" value="1"/>
</dbReference>
<dbReference type="InterPro" id="IPR000971">
    <property type="entry name" value="Globin"/>
</dbReference>
<dbReference type="InterPro" id="IPR009050">
    <property type="entry name" value="Globin-like_sf"/>
</dbReference>
<dbReference type="InterPro" id="IPR012292">
    <property type="entry name" value="Globin/Proto"/>
</dbReference>
<dbReference type="InterPro" id="IPR002337">
    <property type="entry name" value="Hemoglobin_b"/>
</dbReference>
<dbReference type="InterPro" id="IPR050056">
    <property type="entry name" value="Hemoglobin_oxygen_transport"/>
</dbReference>
<dbReference type="PANTHER" id="PTHR11442">
    <property type="entry name" value="HEMOGLOBIN FAMILY MEMBER"/>
    <property type="match status" value="1"/>
</dbReference>
<dbReference type="PANTHER" id="PTHR11442:SF7">
    <property type="entry name" value="HEMOGLOBIN SUBUNIT EPSILON"/>
    <property type="match status" value="1"/>
</dbReference>
<dbReference type="Pfam" id="PF00042">
    <property type="entry name" value="Globin"/>
    <property type="match status" value="1"/>
</dbReference>
<dbReference type="PRINTS" id="PR00814">
    <property type="entry name" value="BETAHAEM"/>
</dbReference>
<dbReference type="SUPFAM" id="SSF46458">
    <property type="entry name" value="Globin-like"/>
    <property type="match status" value="1"/>
</dbReference>
<dbReference type="PROSITE" id="PS01033">
    <property type="entry name" value="GLOBIN"/>
    <property type="match status" value="1"/>
</dbReference>